<evidence type="ECO:0000250" key="1"/>
<evidence type="ECO:0000250" key="2">
    <source>
        <dbReference type="UniProtKB" id="P50213"/>
    </source>
</evidence>
<evidence type="ECO:0000305" key="3"/>
<comment type="function">
    <text evidence="1">Performs an essential role in the oxidative function of the citric acid cycle.</text>
</comment>
<comment type="catalytic activity">
    <reaction>
        <text>D-threo-isocitrate + NAD(+) = 2-oxoglutarate + CO2 + NADH</text>
        <dbReference type="Rhea" id="RHEA:23632"/>
        <dbReference type="ChEBI" id="CHEBI:15562"/>
        <dbReference type="ChEBI" id="CHEBI:16526"/>
        <dbReference type="ChEBI" id="CHEBI:16810"/>
        <dbReference type="ChEBI" id="CHEBI:57540"/>
        <dbReference type="ChEBI" id="CHEBI:57945"/>
        <dbReference type="EC" id="1.1.1.41"/>
    </reaction>
</comment>
<comment type="cofactor">
    <cofactor evidence="1">
        <name>Mg(2+)</name>
        <dbReference type="ChEBI" id="CHEBI:18420"/>
    </cofactor>
    <cofactor evidence="1">
        <name>Mn(2+)</name>
        <dbReference type="ChEBI" id="CHEBI:29035"/>
    </cofactor>
    <text evidence="1">Binds 1 Mg(2+) or Mn(2+) ion per subunit.</text>
</comment>
<comment type="subunit">
    <text evidence="1">Octamer of two non-identical subunits IDH1 and IDH2.</text>
</comment>
<comment type="subcellular location">
    <subcellularLocation>
        <location evidence="1">Mitochondrion</location>
    </subcellularLocation>
</comment>
<comment type="similarity">
    <text evidence="3">Belongs to the isocitrate and isopropylmalate dehydrogenases family.</text>
</comment>
<sequence length="361" mass="39158">MLRQGIAAQKKSFATLAAEQLLPKKYGGRYTVTLIPGDGVGKEVTDSVVKIFENENIPIDWETIDISGLENTENVQRAVESLKRNKVGLKGIWHTPADQTGHGSLNVALRKQLDIFANVALFKSIPGVKTRLNNIDMVIIRENTEGEYSGLEHESVPGVVESLKIMTRAKSERIARFAFDFALKNNRKSVCAVHKANIMKLGDGLFRNTVNEIGANEYPELDVKNIIVDNASMQAVAKPHQFDVLVTPNLYGSILGNIGSALIGGPGLVPGANFGREYAVFEPGSRHVGLDIKGQNVANPTAMILSSTLMLRHLGLNAYADRISKATYDVISEGKSTTRDIGGSASTSEFTNAVIEKLAKL</sequence>
<accession>O94229</accession>
<gene>
    <name type="primary">IDH1</name>
    <name type="ordered locus">KLLA0F04103g</name>
</gene>
<feature type="transit peptide" description="Mitochondrion" evidence="1">
    <location>
        <begin position="1"/>
        <end position="12"/>
    </location>
</feature>
<feature type="chain" id="PRO_0000014429" description="Isocitrate dehydrogenase [NAD] subunit 1, mitochondrial">
    <location>
        <begin position="13"/>
        <end position="361"/>
    </location>
</feature>
<feature type="binding site" evidence="1">
    <location>
        <position position="110"/>
    </location>
    <ligand>
        <name>substrate</name>
    </ligand>
</feature>
<feature type="binding site" evidence="1">
    <location>
        <position position="141"/>
    </location>
    <ligand>
        <name>substrate</name>
    </ligand>
</feature>
<feature type="binding site" evidence="2">
    <location>
        <position position="229"/>
    </location>
    <ligand>
        <name>Mg(2+)</name>
        <dbReference type="ChEBI" id="CHEBI:18420"/>
    </ligand>
</feature>
<feature type="binding site" evidence="1">
    <location>
        <position position="229"/>
    </location>
    <ligand>
        <name>substrate</name>
    </ligand>
</feature>
<feature type="site" description="Critical for catalysis" evidence="1">
    <location>
        <position position="148"/>
    </location>
</feature>
<feature type="site" description="Critical for catalysis" evidence="1">
    <location>
        <position position="195"/>
    </location>
</feature>
<dbReference type="EC" id="1.1.1.41"/>
<dbReference type="EMBL" id="AF045153">
    <property type="protein sequence ID" value="AAC69608.1"/>
    <property type="molecule type" value="Genomic_DNA"/>
</dbReference>
<dbReference type="EMBL" id="CR382126">
    <property type="protein sequence ID" value="CAG97974.1"/>
    <property type="molecule type" value="Genomic_DNA"/>
</dbReference>
<dbReference type="RefSeq" id="XP_455266.1">
    <property type="nucleotide sequence ID" value="XM_455266.1"/>
</dbReference>
<dbReference type="SMR" id="O94229"/>
<dbReference type="FunCoup" id="O94229">
    <property type="interactions" value="814"/>
</dbReference>
<dbReference type="STRING" id="284590.O94229"/>
<dbReference type="PaxDb" id="284590-O94229"/>
<dbReference type="KEGG" id="kla:KLLA0_F04103g"/>
<dbReference type="eggNOG" id="KOG0784">
    <property type="taxonomic scope" value="Eukaryota"/>
</dbReference>
<dbReference type="HOGENOM" id="CLU_031953_0_0_1"/>
<dbReference type="InParanoid" id="O94229"/>
<dbReference type="OMA" id="PWSCDYY"/>
<dbReference type="Proteomes" id="UP000000598">
    <property type="component" value="Chromosome F"/>
</dbReference>
<dbReference type="GO" id="GO:0005739">
    <property type="term" value="C:mitochondrion"/>
    <property type="evidence" value="ECO:0007669"/>
    <property type="project" value="UniProtKB-SubCell"/>
</dbReference>
<dbReference type="GO" id="GO:0004449">
    <property type="term" value="F:isocitrate dehydrogenase (NAD+) activity"/>
    <property type="evidence" value="ECO:0007669"/>
    <property type="project" value="UniProtKB-EC"/>
</dbReference>
<dbReference type="GO" id="GO:0000287">
    <property type="term" value="F:magnesium ion binding"/>
    <property type="evidence" value="ECO:0007669"/>
    <property type="project" value="InterPro"/>
</dbReference>
<dbReference type="GO" id="GO:0051287">
    <property type="term" value="F:NAD binding"/>
    <property type="evidence" value="ECO:0007669"/>
    <property type="project" value="InterPro"/>
</dbReference>
<dbReference type="GO" id="GO:0006102">
    <property type="term" value="P:isocitrate metabolic process"/>
    <property type="evidence" value="ECO:0007669"/>
    <property type="project" value="TreeGrafter"/>
</dbReference>
<dbReference type="GO" id="GO:0006099">
    <property type="term" value="P:tricarboxylic acid cycle"/>
    <property type="evidence" value="ECO:0007669"/>
    <property type="project" value="UniProtKB-KW"/>
</dbReference>
<dbReference type="FunFam" id="3.40.718.10:FF:000001">
    <property type="entry name" value="Isocitrate dehydrogenase [NAD] subunit, mitochondrial"/>
    <property type="match status" value="1"/>
</dbReference>
<dbReference type="Gene3D" id="3.40.718.10">
    <property type="entry name" value="Isopropylmalate Dehydrogenase"/>
    <property type="match status" value="1"/>
</dbReference>
<dbReference type="InterPro" id="IPR019818">
    <property type="entry name" value="IsoCit/isopropylmalate_DH_CS"/>
</dbReference>
<dbReference type="InterPro" id="IPR004434">
    <property type="entry name" value="Isocitrate_DH_NAD"/>
</dbReference>
<dbReference type="InterPro" id="IPR024084">
    <property type="entry name" value="IsoPropMal-DH-like_dom"/>
</dbReference>
<dbReference type="NCBIfam" id="TIGR00175">
    <property type="entry name" value="mito_nad_idh"/>
    <property type="match status" value="1"/>
</dbReference>
<dbReference type="PANTHER" id="PTHR11835">
    <property type="entry name" value="DECARBOXYLATING DEHYDROGENASES-ISOCITRATE, ISOPROPYLMALATE, TARTRATE"/>
    <property type="match status" value="1"/>
</dbReference>
<dbReference type="PANTHER" id="PTHR11835:SF42">
    <property type="entry name" value="ISOCITRATE DEHYDROGENASE [NAD] SUBUNIT BETA, MITOCHONDRIAL"/>
    <property type="match status" value="1"/>
</dbReference>
<dbReference type="Pfam" id="PF00180">
    <property type="entry name" value="Iso_dh"/>
    <property type="match status" value="1"/>
</dbReference>
<dbReference type="SMART" id="SM01329">
    <property type="entry name" value="Iso_dh"/>
    <property type="match status" value="1"/>
</dbReference>
<dbReference type="SUPFAM" id="SSF53659">
    <property type="entry name" value="Isocitrate/Isopropylmalate dehydrogenase-like"/>
    <property type="match status" value="1"/>
</dbReference>
<dbReference type="PROSITE" id="PS00470">
    <property type="entry name" value="IDH_IMDH"/>
    <property type="match status" value="1"/>
</dbReference>
<name>IDH1_KLULA</name>
<proteinExistence type="inferred from homology"/>
<reference key="1">
    <citation type="journal article" date="2000" name="Curr. Genet.">
        <title>Isolation and RNA-binding analysis of NAD+ -isocitrate dehydrogenases from Kluyveromyces lactis and Schizosaccharomyces pombe.</title>
        <authorList>
            <person name="Elzinga S.D.J."/>
            <person name="van Oosterum K."/>
            <person name="Maat C."/>
            <person name="Grivell L.A."/>
            <person name="van der Spek H."/>
        </authorList>
    </citation>
    <scope>NUCLEOTIDE SEQUENCE [GENOMIC DNA]</scope>
    <source>
        <strain>ATCC MYA-539 / JBD100</strain>
    </source>
</reference>
<reference key="2">
    <citation type="journal article" date="2004" name="Nature">
        <title>Genome evolution in yeasts.</title>
        <authorList>
            <person name="Dujon B."/>
            <person name="Sherman D."/>
            <person name="Fischer G."/>
            <person name="Durrens P."/>
            <person name="Casaregola S."/>
            <person name="Lafontaine I."/>
            <person name="de Montigny J."/>
            <person name="Marck C."/>
            <person name="Neuveglise C."/>
            <person name="Talla E."/>
            <person name="Goffard N."/>
            <person name="Frangeul L."/>
            <person name="Aigle M."/>
            <person name="Anthouard V."/>
            <person name="Babour A."/>
            <person name="Barbe V."/>
            <person name="Barnay S."/>
            <person name="Blanchin S."/>
            <person name="Beckerich J.-M."/>
            <person name="Beyne E."/>
            <person name="Bleykasten C."/>
            <person name="Boisrame A."/>
            <person name="Boyer J."/>
            <person name="Cattolico L."/>
            <person name="Confanioleri F."/>
            <person name="de Daruvar A."/>
            <person name="Despons L."/>
            <person name="Fabre E."/>
            <person name="Fairhead C."/>
            <person name="Ferry-Dumazet H."/>
            <person name="Groppi A."/>
            <person name="Hantraye F."/>
            <person name="Hennequin C."/>
            <person name="Jauniaux N."/>
            <person name="Joyet P."/>
            <person name="Kachouri R."/>
            <person name="Kerrest A."/>
            <person name="Koszul R."/>
            <person name="Lemaire M."/>
            <person name="Lesur I."/>
            <person name="Ma L."/>
            <person name="Muller H."/>
            <person name="Nicaud J.-M."/>
            <person name="Nikolski M."/>
            <person name="Oztas S."/>
            <person name="Ozier-Kalogeropoulos O."/>
            <person name="Pellenz S."/>
            <person name="Potier S."/>
            <person name="Richard G.-F."/>
            <person name="Straub M.-L."/>
            <person name="Suleau A."/>
            <person name="Swennen D."/>
            <person name="Tekaia F."/>
            <person name="Wesolowski-Louvel M."/>
            <person name="Westhof E."/>
            <person name="Wirth B."/>
            <person name="Zeniou-Meyer M."/>
            <person name="Zivanovic Y."/>
            <person name="Bolotin-Fukuhara M."/>
            <person name="Thierry A."/>
            <person name="Bouchier C."/>
            <person name="Caudron B."/>
            <person name="Scarpelli C."/>
            <person name="Gaillardin C."/>
            <person name="Weissenbach J."/>
            <person name="Wincker P."/>
            <person name="Souciet J.-L."/>
        </authorList>
    </citation>
    <scope>NUCLEOTIDE SEQUENCE [LARGE SCALE GENOMIC DNA]</scope>
    <source>
        <strain>ATCC 8585 / CBS 2359 / DSM 70799 / NBRC 1267 / NRRL Y-1140 / WM37</strain>
    </source>
</reference>
<organism>
    <name type="scientific">Kluyveromyces lactis (strain ATCC 8585 / CBS 2359 / DSM 70799 / NBRC 1267 / NRRL Y-1140 / WM37)</name>
    <name type="common">Yeast</name>
    <name type="synonym">Candida sphaerica</name>
    <dbReference type="NCBI Taxonomy" id="284590"/>
    <lineage>
        <taxon>Eukaryota</taxon>
        <taxon>Fungi</taxon>
        <taxon>Dikarya</taxon>
        <taxon>Ascomycota</taxon>
        <taxon>Saccharomycotina</taxon>
        <taxon>Saccharomycetes</taxon>
        <taxon>Saccharomycetales</taxon>
        <taxon>Saccharomycetaceae</taxon>
        <taxon>Kluyveromyces</taxon>
    </lineage>
</organism>
<keyword id="KW-0460">Magnesium</keyword>
<keyword id="KW-0464">Manganese</keyword>
<keyword id="KW-0479">Metal-binding</keyword>
<keyword id="KW-0496">Mitochondrion</keyword>
<keyword id="KW-0520">NAD</keyword>
<keyword id="KW-0560">Oxidoreductase</keyword>
<keyword id="KW-1185">Reference proteome</keyword>
<keyword id="KW-0809">Transit peptide</keyword>
<keyword id="KW-0816">Tricarboxylic acid cycle</keyword>
<protein>
    <recommendedName>
        <fullName>Isocitrate dehydrogenase [NAD] subunit 1, mitochondrial</fullName>
        <ecNumber>1.1.1.41</ecNumber>
    </recommendedName>
    <alternativeName>
        <fullName>Isocitric dehydrogenase</fullName>
    </alternativeName>
    <alternativeName>
        <fullName>NAD(+)-specific ICDH</fullName>
    </alternativeName>
</protein>